<protein>
    <recommendedName>
        <fullName>Microtubule-associated protein P320</fullName>
    </recommendedName>
</protein>
<keyword id="KW-0963">Cytoplasm</keyword>
<keyword id="KW-0206">Cytoskeleton</keyword>
<keyword id="KW-0493">Microtubule</keyword>
<keyword id="KW-0677">Repeat</keyword>
<name>P320_TRYBB</name>
<feature type="chain" id="PRO_0000058131" description="Microtubule-associated protein P320">
    <location>
        <begin position="1" status="less than"/>
        <end position="290" status="greater than"/>
    </location>
</feature>
<feature type="repeat">
    <location>
        <begin position="1"/>
        <end position="38"/>
    </location>
</feature>
<feature type="repeat">
    <location>
        <begin position="39"/>
        <end position="76"/>
    </location>
</feature>
<feature type="repeat">
    <location>
        <begin position="77"/>
        <end position="114"/>
    </location>
</feature>
<feature type="repeat">
    <location>
        <begin position="115"/>
        <end position="152"/>
    </location>
</feature>
<feature type="repeat">
    <location>
        <begin position="153"/>
        <end position="190"/>
    </location>
</feature>
<feature type="repeat">
    <location>
        <begin position="191"/>
        <end position="228"/>
    </location>
</feature>
<feature type="repeat">
    <location>
        <begin position="229"/>
        <end position="266"/>
    </location>
</feature>
<feature type="repeat">
    <location>
        <begin position="267"/>
        <end position="290" status="greater than"/>
    </location>
</feature>
<feature type="region of interest" description="Disordered" evidence="1">
    <location>
        <begin position="251"/>
        <end position="290"/>
    </location>
</feature>
<feature type="compositionally biased region" description="Basic and acidic residues" evidence="1">
    <location>
        <begin position="259"/>
        <end position="290"/>
    </location>
</feature>
<feature type="non-terminal residue">
    <location>
        <position position="1"/>
    </location>
</feature>
<feature type="non-terminal residue">
    <location>
        <position position="290"/>
    </location>
</feature>
<dbReference type="EMBL" id="M20569">
    <property type="protein sequence ID" value="AAA30211.1"/>
    <property type="molecule type" value="Genomic_DNA"/>
</dbReference>
<dbReference type="GO" id="GO:0005737">
    <property type="term" value="C:cytoplasm"/>
    <property type="evidence" value="ECO:0007669"/>
    <property type="project" value="UniProtKB-KW"/>
</dbReference>
<dbReference type="GO" id="GO:0005874">
    <property type="term" value="C:microtubule"/>
    <property type="evidence" value="ECO:0007669"/>
    <property type="project" value="UniProtKB-KW"/>
</dbReference>
<comment type="subcellular location">
    <subcellularLocation>
        <location evidence="2">Cytoplasm</location>
        <location evidence="2">Cytoskeleton</location>
    </subcellularLocation>
</comment>
<comment type="domain">
    <text>Made of tandem repeats of a 38 amino acid segment.</text>
</comment>
<sequence length="290" mass="34297">SEYRQKRTVGEEVTTDMRHVDESHFLTTTHEAYKPIDPSEYRQKRTVGEEVTTDMRHVDESHFLTTTHEAYKPIDPSEYRQKRTVGEEVTTDMRHVDESHFLTTTHEAYKPIDPSEYRQKRTVGEEVTTDMRHVDESHFLTTTHEAYKPIDPSEYRQKRTVGEEVTTNMRHVDESHFLTTTHEAYKPIDPSEYRQKRTVGEEVTTDMRHVDESHFLTTTHEAYKPIDPSEYRQKRTVGEEVTTDMRHVDESHFLTTTHEAYKPIDPSEYRQKRTVGEEVTTDMRHVDESH</sequence>
<proteinExistence type="predicted"/>
<organism>
    <name type="scientific">Trypanosoma brucei brucei</name>
    <dbReference type="NCBI Taxonomy" id="5702"/>
    <lineage>
        <taxon>Eukaryota</taxon>
        <taxon>Discoba</taxon>
        <taxon>Euglenozoa</taxon>
        <taxon>Kinetoplastea</taxon>
        <taxon>Metakinetoplastina</taxon>
        <taxon>Trypanosomatida</taxon>
        <taxon>Trypanosomatidae</taxon>
        <taxon>Trypanosoma</taxon>
    </lineage>
</organism>
<accession>P21787</accession>
<reference key="1">
    <citation type="journal article" date="1988" name="Science">
        <title>Large microtubule-associated protein of T. brucei has tandemly repeated, near-identical sequences.</title>
        <authorList>
            <person name="Schneider A."/>
            <person name="Hemphill A."/>
            <person name="Wyler T."/>
            <person name="Seebeck T."/>
        </authorList>
    </citation>
    <scope>NUCLEOTIDE SEQUENCE [GENOMIC DNA]</scope>
</reference>
<evidence type="ECO:0000256" key="1">
    <source>
        <dbReference type="SAM" id="MobiDB-lite"/>
    </source>
</evidence>
<evidence type="ECO:0000305" key="2"/>